<evidence type="ECO:0000255" key="1">
    <source>
        <dbReference type="HAMAP-Rule" id="MF_01331"/>
    </source>
</evidence>
<evidence type="ECO:0000305" key="2"/>
<keyword id="KW-1185">Reference proteome</keyword>
<keyword id="KW-0687">Ribonucleoprotein</keyword>
<keyword id="KW-0689">Ribosomal protein</keyword>
<keyword id="KW-0694">RNA-binding</keyword>
<keyword id="KW-0699">rRNA-binding</keyword>
<dbReference type="EMBL" id="AM180355">
    <property type="protein sequence ID" value="CAJ66893.1"/>
    <property type="molecule type" value="Genomic_DNA"/>
</dbReference>
<dbReference type="RefSeq" id="WP_009887891.1">
    <property type="nucleotide sequence ID" value="NZ_JAUPES010000043.1"/>
</dbReference>
<dbReference type="RefSeq" id="YP_001086542.1">
    <property type="nucleotide sequence ID" value="NC_009089.1"/>
</dbReference>
<dbReference type="SMR" id="Q18CG1"/>
<dbReference type="STRING" id="272563.CD630_00780"/>
<dbReference type="EnsemblBacteria" id="CAJ66893">
    <property type="protein sequence ID" value="CAJ66893"/>
    <property type="gene ID" value="CD630_00780"/>
</dbReference>
<dbReference type="GeneID" id="66352576"/>
<dbReference type="KEGG" id="cdf:CD630_00780"/>
<dbReference type="KEGG" id="pdc:CDIF630_00144"/>
<dbReference type="PATRIC" id="fig|272563.120.peg.84"/>
<dbReference type="eggNOG" id="COG0091">
    <property type="taxonomic scope" value="Bacteria"/>
</dbReference>
<dbReference type="OrthoDB" id="9805969at2"/>
<dbReference type="PhylomeDB" id="Q18CG1"/>
<dbReference type="BioCyc" id="PDIF272563:G12WB-132-MONOMER"/>
<dbReference type="Proteomes" id="UP000001978">
    <property type="component" value="Chromosome"/>
</dbReference>
<dbReference type="GO" id="GO:0022625">
    <property type="term" value="C:cytosolic large ribosomal subunit"/>
    <property type="evidence" value="ECO:0007669"/>
    <property type="project" value="TreeGrafter"/>
</dbReference>
<dbReference type="GO" id="GO:0019843">
    <property type="term" value="F:rRNA binding"/>
    <property type="evidence" value="ECO:0007669"/>
    <property type="project" value="UniProtKB-UniRule"/>
</dbReference>
<dbReference type="GO" id="GO:0003735">
    <property type="term" value="F:structural constituent of ribosome"/>
    <property type="evidence" value="ECO:0007669"/>
    <property type="project" value="InterPro"/>
</dbReference>
<dbReference type="GO" id="GO:0006412">
    <property type="term" value="P:translation"/>
    <property type="evidence" value="ECO:0007669"/>
    <property type="project" value="UniProtKB-UniRule"/>
</dbReference>
<dbReference type="CDD" id="cd00336">
    <property type="entry name" value="Ribosomal_L22"/>
    <property type="match status" value="1"/>
</dbReference>
<dbReference type="FunFam" id="3.90.470.10:FF:000011">
    <property type="entry name" value="50S ribosomal protein L22"/>
    <property type="match status" value="1"/>
</dbReference>
<dbReference type="Gene3D" id="3.90.470.10">
    <property type="entry name" value="Ribosomal protein L22/L17"/>
    <property type="match status" value="1"/>
</dbReference>
<dbReference type="HAMAP" id="MF_01331_B">
    <property type="entry name" value="Ribosomal_uL22_B"/>
    <property type="match status" value="1"/>
</dbReference>
<dbReference type="InterPro" id="IPR001063">
    <property type="entry name" value="Ribosomal_uL22"/>
</dbReference>
<dbReference type="InterPro" id="IPR005727">
    <property type="entry name" value="Ribosomal_uL22_bac/chlpt-type"/>
</dbReference>
<dbReference type="InterPro" id="IPR047867">
    <property type="entry name" value="Ribosomal_uL22_bac/org-type"/>
</dbReference>
<dbReference type="InterPro" id="IPR018260">
    <property type="entry name" value="Ribosomal_uL22_CS"/>
</dbReference>
<dbReference type="InterPro" id="IPR036394">
    <property type="entry name" value="Ribosomal_uL22_sf"/>
</dbReference>
<dbReference type="NCBIfam" id="TIGR01044">
    <property type="entry name" value="rplV_bact"/>
    <property type="match status" value="1"/>
</dbReference>
<dbReference type="PANTHER" id="PTHR13501">
    <property type="entry name" value="CHLOROPLAST 50S RIBOSOMAL PROTEIN L22-RELATED"/>
    <property type="match status" value="1"/>
</dbReference>
<dbReference type="PANTHER" id="PTHR13501:SF8">
    <property type="entry name" value="LARGE RIBOSOMAL SUBUNIT PROTEIN UL22M"/>
    <property type="match status" value="1"/>
</dbReference>
<dbReference type="Pfam" id="PF00237">
    <property type="entry name" value="Ribosomal_L22"/>
    <property type="match status" value="1"/>
</dbReference>
<dbReference type="SUPFAM" id="SSF54843">
    <property type="entry name" value="Ribosomal protein L22"/>
    <property type="match status" value="1"/>
</dbReference>
<dbReference type="PROSITE" id="PS00464">
    <property type="entry name" value="RIBOSOMAL_L22"/>
    <property type="match status" value="1"/>
</dbReference>
<organism>
    <name type="scientific">Clostridioides difficile (strain 630)</name>
    <name type="common">Peptoclostridium difficile</name>
    <dbReference type="NCBI Taxonomy" id="272563"/>
    <lineage>
        <taxon>Bacteria</taxon>
        <taxon>Bacillati</taxon>
        <taxon>Bacillota</taxon>
        <taxon>Clostridia</taxon>
        <taxon>Peptostreptococcales</taxon>
        <taxon>Peptostreptococcaceae</taxon>
        <taxon>Clostridioides</taxon>
    </lineage>
</organism>
<sequence length="111" mass="12251">MEAKATAKYVRVSPRKAGQICDLVRGKNVDEALAILKFTPRGAASIIAKVVKSAKANAENNHEMDTEKLYIASIVANQGPTMKRFMPRAMGRATTIRKRTSHIEVVVKEKK</sequence>
<comment type="function">
    <text evidence="1">This protein binds specifically to 23S rRNA; its binding is stimulated by other ribosomal proteins, e.g. L4, L17, and L20. It is important during the early stages of 50S assembly. It makes multiple contacts with different domains of the 23S rRNA in the assembled 50S subunit and ribosome (By similarity).</text>
</comment>
<comment type="function">
    <text evidence="1">The globular domain of the protein is located near the polypeptide exit tunnel on the outside of the subunit, while an extended beta-hairpin is found that lines the wall of the exit tunnel in the center of the 70S ribosome.</text>
</comment>
<comment type="subunit">
    <text evidence="1">Part of the 50S ribosomal subunit.</text>
</comment>
<comment type="similarity">
    <text evidence="1">Belongs to the universal ribosomal protein uL22 family.</text>
</comment>
<accession>Q18CG1</accession>
<proteinExistence type="inferred from homology"/>
<reference key="1">
    <citation type="journal article" date="2006" name="Nat. Genet.">
        <title>The multidrug-resistant human pathogen Clostridium difficile has a highly mobile, mosaic genome.</title>
        <authorList>
            <person name="Sebaihia M."/>
            <person name="Wren B.W."/>
            <person name="Mullany P."/>
            <person name="Fairweather N.F."/>
            <person name="Minton N."/>
            <person name="Stabler R."/>
            <person name="Thomson N.R."/>
            <person name="Roberts A.P."/>
            <person name="Cerdeno-Tarraga A.M."/>
            <person name="Wang H."/>
            <person name="Holden M.T.G."/>
            <person name="Wright A."/>
            <person name="Churcher C."/>
            <person name="Quail M.A."/>
            <person name="Baker S."/>
            <person name="Bason N."/>
            <person name="Brooks K."/>
            <person name="Chillingworth T."/>
            <person name="Cronin A."/>
            <person name="Davis P."/>
            <person name="Dowd L."/>
            <person name="Fraser A."/>
            <person name="Feltwell T."/>
            <person name="Hance Z."/>
            <person name="Holroyd S."/>
            <person name="Jagels K."/>
            <person name="Moule S."/>
            <person name="Mungall K."/>
            <person name="Price C."/>
            <person name="Rabbinowitsch E."/>
            <person name="Sharp S."/>
            <person name="Simmonds M."/>
            <person name="Stevens K."/>
            <person name="Unwin L."/>
            <person name="Whithead S."/>
            <person name="Dupuy B."/>
            <person name="Dougan G."/>
            <person name="Barrell B."/>
            <person name="Parkhill J."/>
        </authorList>
    </citation>
    <scope>NUCLEOTIDE SEQUENCE [LARGE SCALE GENOMIC DNA]</scope>
    <source>
        <strain>630</strain>
    </source>
</reference>
<feature type="chain" id="PRO_1000052560" description="Large ribosomal subunit protein uL22">
    <location>
        <begin position="1"/>
        <end position="111"/>
    </location>
</feature>
<name>RL22_CLOD6</name>
<protein>
    <recommendedName>
        <fullName evidence="1">Large ribosomal subunit protein uL22</fullName>
    </recommendedName>
    <alternativeName>
        <fullName evidence="2">50S ribosomal protein L22</fullName>
    </alternativeName>
</protein>
<gene>
    <name evidence="1" type="primary">rplV</name>
    <name type="ordered locus">CD630_00780</name>
</gene>